<feature type="chain" id="PRO_0000268664" description="Isochorismatase domain-containing protein 1">
    <location>
        <begin position="1"/>
        <end position="298"/>
    </location>
</feature>
<feature type="modified residue" description="Phosphotyrosine" evidence="1">
    <location>
        <position position="160"/>
    </location>
</feature>
<feature type="modified residue" description="N6-succinyllysine" evidence="2">
    <location>
        <position position="279"/>
    </location>
</feature>
<name>ISOC1_HUMAN</name>
<keyword id="KW-0597">Phosphoprotein</keyword>
<keyword id="KW-1267">Proteomics identification</keyword>
<keyword id="KW-1185">Reference proteome</keyword>
<reference key="1">
    <citation type="journal article" date="2004" name="Genome Res.">
        <title>The status, quality, and expansion of the NIH full-length cDNA project: the Mammalian Gene Collection (MGC).</title>
        <authorList>
            <consortium name="The MGC Project Team"/>
        </authorList>
    </citation>
    <scope>NUCLEOTIDE SEQUENCE [LARGE SCALE MRNA]</scope>
    <source>
        <tissue>Brain</tissue>
        <tissue>Eye</tissue>
    </source>
</reference>
<reference key="2">
    <citation type="journal article" date="2011" name="BMC Syst. Biol.">
        <title>Initial characterization of the human central proteome.</title>
        <authorList>
            <person name="Burkard T.R."/>
            <person name="Planyavsky M."/>
            <person name="Kaupe I."/>
            <person name="Breitwieser F.P."/>
            <person name="Buerckstuemmer T."/>
            <person name="Bennett K.L."/>
            <person name="Superti-Furga G."/>
            <person name="Colinge J."/>
        </authorList>
    </citation>
    <scope>IDENTIFICATION BY MASS SPECTROMETRY [LARGE SCALE ANALYSIS]</scope>
</reference>
<reference key="3">
    <citation type="journal article" date="2014" name="J. Proteomics">
        <title>An enzyme assisted RP-RPLC approach for in-depth analysis of human liver phosphoproteome.</title>
        <authorList>
            <person name="Bian Y."/>
            <person name="Song C."/>
            <person name="Cheng K."/>
            <person name="Dong M."/>
            <person name="Wang F."/>
            <person name="Huang J."/>
            <person name="Sun D."/>
            <person name="Wang L."/>
            <person name="Ye M."/>
            <person name="Zou H."/>
        </authorList>
    </citation>
    <scope>IDENTIFICATION BY MASS SPECTROMETRY [LARGE SCALE ANALYSIS]</scope>
    <source>
        <tissue>Liver</tissue>
    </source>
</reference>
<sequence length="298" mass="32237">MAAAEPAVLALPNSGAGGAGAPSGTVPVLFCFSVFARPSSVPHGAGYELLIQKFLSLYGDQIDMHRKFVVQLFAEEWGQYVDLPKGFAVSERCKVRLVPLQIQLTTLGNLTPSSTVFFCCDMQERFRPAIKYFGDIISVGQRLLQGARILGIPVIVTEQYPKGLGSTVQEIDLTGVKLVLPKTKFSMVLPEVEAALAEIPGVRSVVLFGVETHVCIQQTALELVGRGVEVHIVADATSSRSMMDRMFALERLARTGIIVTTSEAVLLQLVADKDHPKFKEIQNLIKASAPESGLLSKV</sequence>
<evidence type="ECO:0000250" key="1">
    <source>
        <dbReference type="UniProtKB" id="Q6I7R3"/>
    </source>
</evidence>
<evidence type="ECO:0000250" key="2">
    <source>
        <dbReference type="UniProtKB" id="Q91V64"/>
    </source>
</evidence>
<evidence type="ECO:0000305" key="3"/>
<organism>
    <name type="scientific">Homo sapiens</name>
    <name type="common">Human</name>
    <dbReference type="NCBI Taxonomy" id="9606"/>
    <lineage>
        <taxon>Eukaryota</taxon>
        <taxon>Metazoa</taxon>
        <taxon>Chordata</taxon>
        <taxon>Craniata</taxon>
        <taxon>Vertebrata</taxon>
        <taxon>Euteleostomi</taxon>
        <taxon>Mammalia</taxon>
        <taxon>Eutheria</taxon>
        <taxon>Euarchontoglires</taxon>
        <taxon>Primates</taxon>
        <taxon>Haplorrhini</taxon>
        <taxon>Catarrhini</taxon>
        <taxon>Hominidae</taxon>
        <taxon>Homo</taxon>
    </lineage>
</organism>
<comment type="interaction">
    <interactant intactId="EBI-2805787">
        <id>Q96CN7</id>
    </interactant>
    <interactant intactId="EBI-749920">
        <id>Q9P1Z2</id>
        <label>CALCOCO1</label>
    </interactant>
    <organismsDiffer>false</organismsDiffer>
    <experiments>3</experiments>
</comment>
<comment type="similarity">
    <text evidence="3">Belongs to the isochorismatase family.</text>
</comment>
<comment type="sequence caution" evidence="3">
    <conflict type="erroneous initiation">
        <sequence resource="EMBL-CDS" id="AAH08367"/>
    </conflict>
</comment>
<comment type="sequence caution" evidence="3">
    <conflict type="erroneous initiation">
        <sequence resource="EMBL-CDS" id="AAH14105"/>
    </conflict>
</comment>
<accession>Q96CN7</accession>
<accession>Q7Z770</accession>
<protein>
    <recommendedName>
        <fullName>Isochorismatase domain-containing protein 1</fullName>
    </recommendedName>
</protein>
<gene>
    <name type="primary">ISOC1</name>
    <name type="ORF">CGI-111</name>
</gene>
<dbReference type="EMBL" id="BC008367">
    <property type="protein sequence ID" value="AAH08367.1"/>
    <property type="status" value="ALT_INIT"/>
    <property type="molecule type" value="mRNA"/>
</dbReference>
<dbReference type="EMBL" id="BC014105">
    <property type="protein sequence ID" value="AAH14105.2"/>
    <property type="status" value="ALT_INIT"/>
    <property type="molecule type" value="mRNA"/>
</dbReference>
<dbReference type="CCDS" id="CCDS43357.1"/>
<dbReference type="RefSeq" id="NP_057132.2">
    <property type="nucleotide sequence ID" value="NM_016048.2"/>
</dbReference>
<dbReference type="RefSeq" id="XP_054208684.1">
    <property type="nucleotide sequence ID" value="XM_054352709.1"/>
</dbReference>
<dbReference type="SMR" id="Q96CN7"/>
<dbReference type="BioGRID" id="119222">
    <property type="interactions" value="85"/>
</dbReference>
<dbReference type="FunCoup" id="Q96CN7">
    <property type="interactions" value="1241"/>
</dbReference>
<dbReference type="IntAct" id="Q96CN7">
    <property type="interactions" value="25"/>
</dbReference>
<dbReference type="MINT" id="Q96CN7"/>
<dbReference type="STRING" id="9606.ENSP00000173527"/>
<dbReference type="GlyGen" id="Q96CN7">
    <property type="glycosylation" value="1 site, 1 O-linked glycan (1 site)"/>
</dbReference>
<dbReference type="iPTMnet" id="Q96CN7"/>
<dbReference type="PhosphoSitePlus" id="Q96CN7"/>
<dbReference type="SwissPalm" id="Q96CN7"/>
<dbReference type="BioMuta" id="ISOC1"/>
<dbReference type="DMDM" id="119371160"/>
<dbReference type="CPTAC" id="CPTAC-84"/>
<dbReference type="CPTAC" id="CPTAC-85"/>
<dbReference type="jPOST" id="Q96CN7"/>
<dbReference type="MassIVE" id="Q96CN7"/>
<dbReference type="PaxDb" id="9606-ENSP00000173527"/>
<dbReference type="PeptideAtlas" id="Q96CN7"/>
<dbReference type="ProteomicsDB" id="76199"/>
<dbReference type="Pumba" id="Q96CN7"/>
<dbReference type="ABCD" id="Q96CN7">
    <property type="antibodies" value="9 sequenced antibodies"/>
</dbReference>
<dbReference type="Antibodypedia" id="63783">
    <property type="antibodies" value="59 antibodies from 17 providers"/>
</dbReference>
<dbReference type="DNASU" id="51015"/>
<dbReference type="Ensembl" id="ENST00000173527.6">
    <property type="protein sequence ID" value="ENSP00000173527.5"/>
    <property type="gene ID" value="ENSG00000066583.12"/>
</dbReference>
<dbReference type="GeneID" id="51015"/>
<dbReference type="KEGG" id="hsa:51015"/>
<dbReference type="MANE-Select" id="ENST00000173527.6">
    <property type="protein sequence ID" value="ENSP00000173527.5"/>
    <property type="RefSeq nucleotide sequence ID" value="NM_016048.2"/>
    <property type="RefSeq protein sequence ID" value="NP_057132.2"/>
</dbReference>
<dbReference type="UCSC" id="uc003kva.4">
    <property type="organism name" value="human"/>
</dbReference>
<dbReference type="AGR" id="HGNC:24254"/>
<dbReference type="CTD" id="51015"/>
<dbReference type="DisGeNET" id="51015"/>
<dbReference type="GeneCards" id="ISOC1"/>
<dbReference type="HGNC" id="HGNC:24254">
    <property type="gene designation" value="ISOC1"/>
</dbReference>
<dbReference type="HPA" id="ENSG00000066583">
    <property type="expression patterns" value="Low tissue specificity"/>
</dbReference>
<dbReference type="MIM" id="620805">
    <property type="type" value="gene"/>
</dbReference>
<dbReference type="neXtProt" id="NX_Q96CN7"/>
<dbReference type="OpenTargets" id="ENSG00000066583"/>
<dbReference type="PharmGKB" id="PA134973470"/>
<dbReference type="VEuPathDB" id="HostDB:ENSG00000066583"/>
<dbReference type="eggNOG" id="KOG4044">
    <property type="taxonomic scope" value="Eukaryota"/>
</dbReference>
<dbReference type="GeneTree" id="ENSGT00390000006753"/>
<dbReference type="HOGENOM" id="CLU_047255_0_0_1"/>
<dbReference type="InParanoid" id="Q96CN7"/>
<dbReference type="OMA" id="QHACANI"/>
<dbReference type="OrthoDB" id="269496at2759"/>
<dbReference type="PAN-GO" id="Q96CN7">
    <property type="GO annotations" value="1 GO annotation based on evolutionary models"/>
</dbReference>
<dbReference type="PhylomeDB" id="Q96CN7"/>
<dbReference type="TreeFam" id="TF313459"/>
<dbReference type="PathwayCommons" id="Q96CN7"/>
<dbReference type="SignaLink" id="Q96CN7"/>
<dbReference type="BioGRID-ORCS" id="51015">
    <property type="hits" value="14 hits in 1149 CRISPR screens"/>
</dbReference>
<dbReference type="ChiTaRS" id="ISOC1">
    <property type="organism name" value="human"/>
</dbReference>
<dbReference type="GenomeRNAi" id="51015"/>
<dbReference type="Pharos" id="Q96CN7">
    <property type="development level" value="Tdark"/>
</dbReference>
<dbReference type="PRO" id="PR:Q96CN7"/>
<dbReference type="Proteomes" id="UP000005640">
    <property type="component" value="Chromosome 5"/>
</dbReference>
<dbReference type="RNAct" id="Q96CN7">
    <property type="molecule type" value="protein"/>
</dbReference>
<dbReference type="Bgee" id="ENSG00000066583">
    <property type="expression patterns" value="Expressed in secondary oocyte and 200 other cell types or tissues"/>
</dbReference>
<dbReference type="ExpressionAtlas" id="Q96CN7">
    <property type="expression patterns" value="baseline and differential"/>
</dbReference>
<dbReference type="GO" id="GO:0005737">
    <property type="term" value="C:cytoplasm"/>
    <property type="evidence" value="ECO:0000318"/>
    <property type="project" value="GO_Central"/>
</dbReference>
<dbReference type="GO" id="GO:0005777">
    <property type="term" value="C:peroxisome"/>
    <property type="evidence" value="ECO:0000250"/>
    <property type="project" value="HGNC-UCL"/>
</dbReference>
<dbReference type="CDD" id="cd01012">
    <property type="entry name" value="YcaC_related"/>
    <property type="match status" value="1"/>
</dbReference>
<dbReference type="FunFam" id="3.40.50.850:FF:000001">
    <property type="entry name" value="Isochorismatase domain-containing protein 1"/>
    <property type="match status" value="1"/>
</dbReference>
<dbReference type="Gene3D" id="3.40.50.850">
    <property type="entry name" value="Isochorismatase-like"/>
    <property type="match status" value="1"/>
</dbReference>
<dbReference type="InterPro" id="IPR000868">
    <property type="entry name" value="Isochorismatase-like_dom"/>
</dbReference>
<dbReference type="InterPro" id="IPR036380">
    <property type="entry name" value="Isochorismatase-like_sf"/>
</dbReference>
<dbReference type="InterPro" id="IPR050993">
    <property type="entry name" value="Isochorismatase_domain"/>
</dbReference>
<dbReference type="PANTHER" id="PTHR14119">
    <property type="entry name" value="HYDROLASE"/>
    <property type="match status" value="1"/>
</dbReference>
<dbReference type="PANTHER" id="PTHR14119:SF17">
    <property type="entry name" value="ISOCHORISMATASE DOMAIN-CONTAINING PROTEIN 1"/>
    <property type="match status" value="1"/>
</dbReference>
<dbReference type="Pfam" id="PF00857">
    <property type="entry name" value="Isochorismatase"/>
    <property type="match status" value="1"/>
</dbReference>
<dbReference type="SUPFAM" id="SSF52499">
    <property type="entry name" value="Isochorismatase-like hydrolases"/>
    <property type="match status" value="1"/>
</dbReference>
<proteinExistence type="evidence at protein level"/>